<organism>
    <name type="scientific">Rickettsia peacockii (strain Rustic)</name>
    <dbReference type="NCBI Taxonomy" id="562019"/>
    <lineage>
        <taxon>Bacteria</taxon>
        <taxon>Pseudomonadati</taxon>
        <taxon>Pseudomonadota</taxon>
        <taxon>Alphaproteobacteria</taxon>
        <taxon>Rickettsiales</taxon>
        <taxon>Rickettsiaceae</taxon>
        <taxon>Rickettsieae</taxon>
        <taxon>Rickettsia</taxon>
        <taxon>spotted fever group</taxon>
    </lineage>
</organism>
<feature type="chain" id="PRO_1000202359" description="DNA-directed RNA polymerase subunit alpha">
    <location>
        <begin position="1"/>
        <end position="340"/>
    </location>
</feature>
<feature type="region of interest" description="Alpha N-terminal domain (alpha-NTD)" evidence="1">
    <location>
        <begin position="1"/>
        <end position="236"/>
    </location>
</feature>
<feature type="region of interest" description="Alpha C-terminal domain (alpha-CTD)" evidence="1">
    <location>
        <begin position="251"/>
        <end position="340"/>
    </location>
</feature>
<accession>C4K2F5</accession>
<comment type="function">
    <text evidence="1">DNA-dependent RNA polymerase catalyzes the transcription of DNA into RNA using the four ribonucleoside triphosphates as substrates.</text>
</comment>
<comment type="catalytic activity">
    <reaction evidence="1">
        <text>RNA(n) + a ribonucleoside 5'-triphosphate = RNA(n+1) + diphosphate</text>
        <dbReference type="Rhea" id="RHEA:21248"/>
        <dbReference type="Rhea" id="RHEA-COMP:14527"/>
        <dbReference type="Rhea" id="RHEA-COMP:17342"/>
        <dbReference type="ChEBI" id="CHEBI:33019"/>
        <dbReference type="ChEBI" id="CHEBI:61557"/>
        <dbReference type="ChEBI" id="CHEBI:140395"/>
        <dbReference type="EC" id="2.7.7.6"/>
    </reaction>
</comment>
<comment type="subunit">
    <text evidence="1">Homodimer. The RNAP catalytic core consists of 2 alpha, 1 beta, 1 beta' and 1 omega subunit. When a sigma factor is associated with the core the holoenzyme is formed, which can initiate transcription.</text>
</comment>
<comment type="domain">
    <text evidence="1">The N-terminal domain is essential for RNAP assembly and basal transcription, whereas the C-terminal domain is involved in interaction with transcriptional regulators and with upstream promoter elements.</text>
</comment>
<comment type="similarity">
    <text evidence="1">Belongs to the RNA polymerase alpha chain family.</text>
</comment>
<proteinExistence type="inferred from homology"/>
<gene>
    <name evidence="1" type="primary">rpoA</name>
    <name type="ordered locus">RPR_06110</name>
</gene>
<sequence>MLSLSKNWNTLIKPNKVAYENFPETNNKAKIVVEPLERGFGLTLGNAMRRVLLSSLQGAAITSIKIPAIEHEFSSIPGVKEDVSEVILNIKGIEVKMHVAEKRIMKLKATGPCVVKAGMIETGHDVEILNPDHVICDLAKDKQLEMELTCKVGKGYVLSTNSYEDNLPIGEIAIDALFNPVKSVTYKVENTRVGQVTDYDKLIMFVETNGDVLPEMAVGLAARILQEQLQLFISFEEQEEDKQVKTDALPFAPYLLKRVDELELSVRSANCLKNDNIIYIGDLVKRTESDMLRTPNFGRKSLNEIKEILAKFNLRFGMDVPDWPPENIQELSKRYEDSYN</sequence>
<dbReference type="EC" id="2.7.7.6" evidence="1"/>
<dbReference type="EMBL" id="CP001227">
    <property type="protein sequence ID" value="ACR47752.1"/>
    <property type="molecule type" value="Genomic_DNA"/>
</dbReference>
<dbReference type="RefSeq" id="WP_012736935.1">
    <property type="nucleotide sequence ID" value="NC_012730.1"/>
</dbReference>
<dbReference type="SMR" id="C4K2F5"/>
<dbReference type="KEGG" id="rpk:RPR_06110"/>
<dbReference type="HOGENOM" id="CLU_053084_0_0_5"/>
<dbReference type="Proteomes" id="UP000005015">
    <property type="component" value="Chromosome"/>
</dbReference>
<dbReference type="GO" id="GO:0005737">
    <property type="term" value="C:cytoplasm"/>
    <property type="evidence" value="ECO:0007669"/>
    <property type="project" value="UniProtKB-ARBA"/>
</dbReference>
<dbReference type="GO" id="GO:0000428">
    <property type="term" value="C:DNA-directed RNA polymerase complex"/>
    <property type="evidence" value="ECO:0007669"/>
    <property type="project" value="UniProtKB-KW"/>
</dbReference>
<dbReference type="GO" id="GO:0003677">
    <property type="term" value="F:DNA binding"/>
    <property type="evidence" value="ECO:0007669"/>
    <property type="project" value="UniProtKB-UniRule"/>
</dbReference>
<dbReference type="GO" id="GO:0003899">
    <property type="term" value="F:DNA-directed RNA polymerase activity"/>
    <property type="evidence" value="ECO:0007669"/>
    <property type="project" value="UniProtKB-UniRule"/>
</dbReference>
<dbReference type="GO" id="GO:0046983">
    <property type="term" value="F:protein dimerization activity"/>
    <property type="evidence" value="ECO:0007669"/>
    <property type="project" value="InterPro"/>
</dbReference>
<dbReference type="GO" id="GO:0006351">
    <property type="term" value="P:DNA-templated transcription"/>
    <property type="evidence" value="ECO:0007669"/>
    <property type="project" value="UniProtKB-UniRule"/>
</dbReference>
<dbReference type="CDD" id="cd06928">
    <property type="entry name" value="RNAP_alpha_NTD"/>
    <property type="match status" value="1"/>
</dbReference>
<dbReference type="FunFam" id="1.10.150.20:FF:000001">
    <property type="entry name" value="DNA-directed RNA polymerase subunit alpha"/>
    <property type="match status" value="1"/>
</dbReference>
<dbReference type="FunFam" id="2.170.120.12:FF:000001">
    <property type="entry name" value="DNA-directed RNA polymerase subunit alpha"/>
    <property type="match status" value="1"/>
</dbReference>
<dbReference type="Gene3D" id="1.10.150.20">
    <property type="entry name" value="5' to 3' exonuclease, C-terminal subdomain"/>
    <property type="match status" value="1"/>
</dbReference>
<dbReference type="Gene3D" id="2.170.120.12">
    <property type="entry name" value="DNA-directed RNA polymerase, insert domain"/>
    <property type="match status" value="1"/>
</dbReference>
<dbReference type="Gene3D" id="3.30.1360.10">
    <property type="entry name" value="RNA polymerase, RBP11-like subunit"/>
    <property type="match status" value="1"/>
</dbReference>
<dbReference type="HAMAP" id="MF_00059">
    <property type="entry name" value="RNApol_bact_RpoA"/>
    <property type="match status" value="1"/>
</dbReference>
<dbReference type="InterPro" id="IPR011262">
    <property type="entry name" value="DNA-dir_RNA_pol_insert"/>
</dbReference>
<dbReference type="InterPro" id="IPR011263">
    <property type="entry name" value="DNA-dir_RNA_pol_RpoA/D/Rpb3"/>
</dbReference>
<dbReference type="InterPro" id="IPR011773">
    <property type="entry name" value="DNA-dir_RpoA"/>
</dbReference>
<dbReference type="InterPro" id="IPR036603">
    <property type="entry name" value="RBP11-like"/>
</dbReference>
<dbReference type="InterPro" id="IPR011260">
    <property type="entry name" value="RNAP_asu_C"/>
</dbReference>
<dbReference type="InterPro" id="IPR036643">
    <property type="entry name" value="RNApol_insert_sf"/>
</dbReference>
<dbReference type="NCBIfam" id="NF003513">
    <property type="entry name" value="PRK05182.1-2"/>
    <property type="match status" value="1"/>
</dbReference>
<dbReference type="NCBIfam" id="NF003519">
    <property type="entry name" value="PRK05182.2-5"/>
    <property type="match status" value="1"/>
</dbReference>
<dbReference type="NCBIfam" id="TIGR02027">
    <property type="entry name" value="rpoA"/>
    <property type="match status" value="1"/>
</dbReference>
<dbReference type="Pfam" id="PF01000">
    <property type="entry name" value="RNA_pol_A_bac"/>
    <property type="match status" value="1"/>
</dbReference>
<dbReference type="Pfam" id="PF03118">
    <property type="entry name" value="RNA_pol_A_CTD"/>
    <property type="match status" value="1"/>
</dbReference>
<dbReference type="Pfam" id="PF01193">
    <property type="entry name" value="RNA_pol_L"/>
    <property type="match status" value="1"/>
</dbReference>
<dbReference type="SMART" id="SM00662">
    <property type="entry name" value="RPOLD"/>
    <property type="match status" value="1"/>
</dbReference>
<dbReference type="SUPFAM" id="SSF47789">
    <property type="entry name" value="C-terminal domain of RNA polymerase alpha subunit"/>
    <property type="match status" value="1"/>
</dbReference>
<dbReference type="SUPFAM" id="SSF56553">
    <property type="entry name" value="Insert subdomain of RNA polymerase alpha subunit"/>
    <property type="match status" value="1"/>
</dbReference>
<dbReference type="SUPFAM" id="SSF55257">
    <property type="entry name" value="RBP11-like subunits of RNA polymerase"/>
    <property type="match status" value="1"/>
</dbReference>
<reference key="1">
    <citation type="journal article" date="2009" name="PLoS ONE">
        <title>Genome sequence of the endosymbiont Rickettsia peacockii and comparison with virulent Rickettsia rickettsii: identification of virulence factors.</title>
        <authorList>
            <person name="Felsheim R.F."/>
            <person name="Kurtti T.J."/>
            <person name="Munderloh U.G."/>
        </authorList>
    </citation>
    <scope>NUCLEOTIDE SEQUENCE [LARGE SCALE GENOMIC DNA]</scope>
    <source>
        <strain>Rustic</strain>
    </source>
</reference>
<evidence type="ECO:0000255" key="1">
    <source>
        <dbReference type="HAMAP-Rule" id="MF_00059"/>
    </source>
</evidence>
<protein>
    <recommendedName>
        <fullName evidence="1">DNA-directed RNA polymerase subunit alpha</fullName>
        <shortName evidence="1">RNAP subunit alpha</shortName>
        <ecNumber evidence="1">2.7.7.6</ecNumber>
    </recommendedName>
    <alternativeName>
        <fullName evidence="1">RNA polymerase subunit alpha</fullName>
    </alternativeName>
    <alternativeName>
        <fullName evidence="1">Transcriptase subunit alpha</fullName>
    </alternativeName>
</protein>
<keyword id="KW-0240">DNA-directed RNA polymerase</keyword>
<keyword id="KW-0548">Nucleotidyltransferase</keyword>
<keyword id="KW-0804">Transcription</keyword>
<keyword id="KW-0808">Transferase</keyword>
<name>RPOA_RICPU</name>